<comment type="function">
    <text evidence="1">Part of the RFC clamp loader complex which loads the PCNA sliding clamp onto DNA.</text>
</comment>
<comment type="subunit">
    <text evidence="1">Heteromultimer composed of small subunits (RfcS) and large subunits (RfcL).</text>
</comment>
<comment type="similarity">
    <text evidence="1">Belongs to the activator 1 small subunits family. RfcS subfamily.</text>
</comment>
<organism>
    <name type="scientific">Methanosarcina acetivorans (strain ATCC 35395 / DSM 2834 / JCM 12185 / C2A)</name>
    <dbReference type="NCBI Taxonomy" id="188937"/>
    <lineage>
        <taxon>Archaea</taxon>
        <taxon>Methanobacteriati</taxon>
        <taxon>Methanobacteriota</taxon>
        <taxon>Stenosarchaea group</taxon>
        <taxon>Methanomicrobia</taxon>
        <taxon>Methanosarcinales</taxon>
        <taxon>Methanosarcinaceae</taxon>
        <taxon>Methanosarcina</taxon>
    </lineage>
</organism>
<name>RFCS_METAC</name>
<gene>
    <name evidence="1" type="primary">rfcS</name>
    <name type="ordered locus">MA_0669</name>
</gene>
<protein>
    <recommendedName>
        <fullName evidence="1">Replication factor C small subunit</fullName>
        <shortName evidence="1">RFC small subunit</shortName>
    </recommendedName>
    <alternativeName>
        <fullName evidence="1">Clamp loader small subunit</fullName>
    </alternativeName>
</protein>
<feature type="chain" id="PRO_0000135974" description="Replication factor C small subunit">
    <location>
        <begin position="1"/>
        <end position="338"/>
    </location>
</feature>
<feature type="binding site" evidence="1">
    <location>
        <begin position="53"/>
        <end position="60"/>
    </location>
    <ligand>
        <name>ATP</name>
        <dbReference type="ChEBI" id="CHEBI:30616"/>
    </ligand>
</feature>
<proteinExistence type="inferred from homology"/>
<accession>Q8TSX5</accession>
<evidence type="ECO:0000255" key="1">
    <source>
        <dbReference type="HAMAP-Rule" id="MF_01509"/>
    </source>
</evidence>
<keyword id="KW-0067">ATP-binding</keyword>
<keyword id="KW-0235">DNA replication</keyword>
<keyword id="KW-0547">Nucleotide-binding</keyword>
<keyword id="KW-1185">Reference proteome</keyword>
<sequence>MQALMEDSKIKEEIWIEKYRPVRLNQVAGQDETIERLKSYVATKNLPHLLFSGPPGVGKTASAVSIAREIFGEDLWRENFTELNASDERGIDIVRNKIKNFAKTAPIGGAPFKIIFLDEADALTADAQSALRRTMERFSSNCRFILSCNYSSKIIEPIQSRCAVYRFRRLSDEAIKERLEYIAGDQGLSITEGGYEALIYVAQGDMRKAVNSLQAAAFIDTDKSISRETIYRTTATANPEEIKNLIETALRGNFRIARKELNRLLYEEGLSGEDIVGQIYRVVSEMDNLMVLDLGLTERDIVALVDVIGETDFRLTEGASEKIQLEALLAHFALSREN</sequence>
<reference key="1">
    <citation type="journal article" date="2002" name="Genome Res.">
        <title>The genome of Methanosarcina acetivorans reveals extensive metabolic and physiological diversity.</title>
        <authorList>
            <person name="Galagan J.E."/>
            <person name="Nusbaum C."/>
            <person name="Roy A."/>
            <person name="Endrizzi M.G."/>
            <person name="Macdonald P."/>
            <person name="FitzHugh W."/>
            <person name="Calvo S."/>
            <person name="Engels R."/>
            <person name="Smirnov S."/>
            <person name="Atnoor D."/>
            <person name="Brown A."/>
            <person name="Allen N."/>
            <person name="Naylor J."/>
            <person name="Stange-Thomann N."/>
            <person name="DeArellano K."/>
            <person name="Johnson R."/>
            <person name="Linton L."/>
            <person name="McEwan P."/>
            <person name="McKernan K."/>
            <person name="Talamas J."/>
            <person name="Tirrell A."/>
            <person name="Ye W."/>
            <person name="Zimmer A."/>
            <person name="Barber R.D."/>
            <person name="Cann I."/>
            <person name="Graham D.E."/>
            <person name="Grahame D.A."/>
            <person name="Guss A.M."/>
            <person name="Hedderich R."/>
            <person name="Ingram-Smith C."/>
            <person name="Kuettner H.C."/>
            <person name="Krzycki J.A."/>
            <person name="Leigh J.A."/>
            <person name="Li W."/>
            <person name="Liu J."/>
            <person name="Mukhopadhyay B."/>
            <person name="Reeve J.N."/>
            <person name="Smith K."/>
            <person name="Springer T.A."/>
            <person name="Umayam L.A."/>
            <person name="White O."/>
            <person name="White R.H."/>
            <person name="de Macario E.C."/>
            <person name="Ferry J.G."/>
            <person name="Jarrell K.F."/>
            <person name="Jing H."/>
            <person name="Macario A.J.L."/>
            <person name="Paulsen I.T."/>
            <person name="Pritchett M."/>
            <person name="Sowers K.R."/>
            <person name="Swanson R.V."/>
            <person name="Zinder S.H."/>
            <person name="Lander E."/>
            <person name="Metcalf W.W."/>
            <person name="Birren B."/>
        </authorList>
    </citation>
    <scope>NUCLEOTIDE SEQUENCE [LARGE SCALE GENOMIC DNA]</scope>
    <source>
        <strain>ATCC 35395 / DSM 2834 / JCM 12185 / C2A</strain>
    </source>
</reference>
<dbReference type="EMBL" id="AE010299">
    <property type="protein sequence ID" value="AAM04110.1"/>
    <property type="molecule type" value="Genomic_DNA"/>
</dbReference>
<dbReference type="SMR" id="Q8TSX5"/>
<dbReference type="STRING" id="188937.MA_0669"/>
<dbReference type="EnsemblBacteria" id="AAM04110">
    <property type="protein sequence ID" value="AAM04110"/>
    <property type="gene ID" value="MA_0669"/>
</dbReference>
<dbReference type="KEGG" id="mac:MA_0669"/>
<dbReference type="HOGENOM" id="CLU_042324_1_0_2"/>
<dbReference type="InParanoid" id="Q8TSX5"/>
<dbReference type="PhylomeDB" id="Q8TSX5"/>
<dbReference type="Proteomes" id="UP000002487">
    <property type="component" value="Chromosome"/>
</dbReference>
<dbReference type="GO" id="GO:0005663">
    <property type="term" value="C:DNA replication factor C complex"/>
    <property type="evidence" value="ECO:0000318"/>
    <property type="project" value="GO_Central"/>
</dbReference>
<dbReference type="GO" id="GO:0005524">
    <property type="term" value="F:ATP binding"/>
    <property type="evidence" value="ECO:0007669"/>
    <property type="project" value="UniProtKB-UniRule"/>
</dbReference>
<dbReference type="GO" id="GO:0016887">
    <property type="term" value="F:ATP hydrolysis activity"/>
    <property type="evidence" value="ECO:0007669"/>
    <property type="project" value="InterPro"/>
</dbReference>
<dbReference type="GO" id="GO:0003677">
    <property type="term" value="F:DNA binding"/>
    <property type="evidence" value="ECO:0007669"/>
    <property type="project" value="InterPro"/>
</dbReference>
<dbReference type="GO" id="GO:0003689">
    <property type="term" value="F:DNA clamp loader activity"/>
    <property type="evidence" value="ECO:0007669"/>
    <property type="project" value="UniProtKB-UniRule"/>
</dbReference>
<dbReference type="GO" id="GO:0006281">
    <property type="term" value="P:DNA repair"/>
    <property type="evidence" value="ECO:0000318"/>
    <property type="project" value="GO_Central"/>
</dbReference>
<dbReference type="GO" id="GO:0006261">
    <property type="term" value="P:DNA-templated DNA replication"/>
    <property type="evidence" value="ECO:0000318"/>
    <property type="project" value="GO_Central"/>
</dbReference>
<dbReference type="CDD" id="cd00009">
    <property type="entry name" value="AAA"/>
    <property type="match status" value="1"/>
</dbReference>
<dbReference type="CDD" id="cd18140">
    <property type="entry name" value="HLD_clamp_RFC"/>
    <property type="match status" value="1"/>
</dbReference>
<dbReference type="FunFam" id="1.10.8.60:FF:000279">
    <property type="entry name" value="Replication factor C small subunit"/>
    <property type="match status" value="1"/>
</dbReference>
<dbReference type="FunFam" id="1.20.272.10:FF:000029">
    <property type="entry name" value="Replication factor C small subunit"/>
    <property type="match status" value="1"/>
</dbReference>
<dbReference type="FunFam" id="3.40.50.300:FF:000129">
    <property type="entry name" value="Replication factor C subunit 5"/>
    <property type="match status" value="1"/>
</dbReference>
<dbReference type="Gene3D" id="1.10.8.60">
    <property type="match status" value="1"/>
</dbReference>
<dbReference type="Gene3D" id="1.20.272.10">
    <property type="match status" value="1"/>
</dbReference>
<dbReference type="Gene3D" id="3.40.50.300">
    <property type="entry name" value="P-loop containing nucleotide triphosphate hydrolases"/>
    <property type="match status" value="1"/>
</dbReference>
<dbReference type="HAMAP" id="MF_01509">
    <property type="entry name" value="RfcS"/>
    <property type="match status" value="1"/>
</dbReference>
<dbReference type="InterPro" id="IPR003593">
    <property type="entry name" value="AAA+_ATPase"/>
</dbReference>
<dbReference type="InterPro" id="IPR003959">
    <property type="entry name" value="ATPase_AAA_core"/>
</dbReference>
<dbReference type="InterPro" id="IPR008921">
    <property type="entry name" value="DNA_pol3_clamp-load_cplx_C"/>
</dbReference>
<dbReference type="InterPro" id="IPR050238">
    <property type="entry name" value="DNA_Rep/Repair_Clamp_Loader"/>
</dbReference>
<dbReference type="InterPro" id="IPR027417">
    <property type="entry name" value="P-loop_NTPase"/>
</dbReference>
<dbReference type="InterPro" id="IPR023748">
    <property type="entry name" value="Rep_factor-C_ssu_arc"/>
</dbReference>
<dbReference type="InterPro" id="IPR013748">
    <property type="entry name" value="Rep_factorC_C"/>
</dbReference>
<dbReference type="InterPro" id="IPR047854">
    <property type="entry name" value="RFC_lid"/>
</dbReference>
<dbReference type="NCBIfam" id="NF001679">
    <property type="entry name" value="PRK00440.1"/>
    <property type="match status" value="1"/>
</dbReference>
<dbReference type="PANTHER" id="PTHR11669">
    <property type="entry name" value="REPLICATION FACTOR C / DNA POLYMERASE III GAMMA-TAU SUBUNIT"/>
    <property type="match status" value="1"/>
</dbReference>
<dbReference type="PANTHER" id="PTHR11669:SF20">
    <property type="entry name" value="REPLICATION FACTOR C SUBUNIT 4"/>
    <property type="match status" value="1"/>
</dbReference>
<dbReference type="Pfam" id="PF00004">
    <property type="entry name" value="AAA"/>
    <property type="match status" value="1"/>
</dbReference>
<dbReference type="Pfam" id="PF08542">
    <property type="entry name" value="Rep_fac_C"/>
    <property type="match status" value="1"/>
</dbReference>
<dbReference type="SMART" id="SM00382">
    <property type="entry name" value="AAA"/>
    <property type="match status" value="1"/>
</dbReference>
<dbReference type="SUPFAM" id="SSF52540">
    <property type="entry name" value="P-loop containing nucleoside triphosphate hydrolases"/>
    <property type="match status" value="1"/>
</dbReference>
<dbReference type="SUPFAM" id="SSF48019">
    <property type="entry name" value="post-AAA+ oligomerization domain-like"/>
    <property type="match status" value="1"/>
</dbReference>